<name>IL10_FELCA</name>
<dbReference type="EMBL" id="U39569">
    <property type="protein sequence ID" value="AAA81771.1"/>
    <property type="molecule type" value="mRNA"/>
</dbReference>
<dbReference type="EMBL" id="AF060520">
    <property type="protein sequence ID" value="AAC64708.1"/>
    <property type="molecule type" value="mRNA"/>
</dbReference>
<dbReference type="RefSeq" id="NP_001009209.1">
    <property type="nucleotide sequence ID" value="NM_001009209.1"/>
</dbReference>
<dbReference type="SMR" id="P55029"/>
<dbReference type="FunCoup" id="P55029">
    <property type="interactions" value="68"/>
</dbReference>
<dbReference type="STRING" id="9685.ENSFCAP00000012535"/>
<dbReference type="GlyCosmos" id="P55029">
    <property type="glycosylation" value="2 sites, No reported glycans"/>
</dbReference>
<dbReference type="PaxDb" id="9685-ENSFCAP00000012535"/>
<dbReference type="GeneID" id="493683"/>
<dbReference type="KEGG" id="fca:493683"/>
<dbReference type="CTD" id="3586"/>
<dbReference type="eggNOG" id="ENOG502S22U">
    <property type="taxonomic scope" value="Eukaryota"/>
</dbReference>
<dbReference type="InParanoid" id="P55029"/>
<dbReference type="OrthoDB" id="9931894at2759"/>
<dbReference type="TreeFam" id="TF333253"/>
<dbReference type="Proteomes" id="UP000011712">
    <property type="component" value="Unplaced"/>
</dbReference>
<dbReference type="GO" id="GO:0005615">
    <property type="term" value="C:extracellular space"/>
    <property type="evidence" value="ECO:0000250"/>
    <property type="project" value="UniProtKB"/>
</dbReference>
<dbReference type="GO" id="GO:0005125">
    <property type="term" value="F:cytokine activity"/>
    <property type="evidence" value="ECO:0000318"/>
    <property type="project" value="GO_Central"/>
</dbReference>
<dbReference type="GO" id="GO:0006955">
    <property type="term" value="P:immune response"/>
    <property type="evidence" value="ECO:0000318"/>
    <property type="project" value="GO_Central"/>
</dbReference>
<dbReference type="GO" id="GO:0140105">
    <property type="term" value="P:interleukin-10-mediated signaling pathway"/>
    <property type="evidence" value="ECO:0000318"/>
    <property type="project" value="GO_Central"/>
</dbReference>
<dbReference type="GO" id="GO:0030889">
    <property type="term" value="P:negative regulation of B cell proliferation"/>
    <property type="evidence" value="ECO:0000250"/>
    <property type="project" value="UniProtKB"/>
</dbReference>
<dbReference type="GO" id="GO:0002719">
    <property type="term" value="P:negative regulation of cytokine production involved in immune response"/>
    <property type="evidence" value="ECO:0000250"/>
    <property type="project" value="UniProtKB"/>
</dbReference>
<dbReference type="GO" id="GO:0050728">
    <property type="term" value="P:negative regulation of inflammatory response"/>
    <property type="evidence" value="ECO:0000250"/>
    <property type="project" value="UniProtKB"/>
</dbReference>
<dbReference type="GO" id="GO:0032715">
    <property type="term" value="P:negative regulation of interleukin-6 production"/>
    <property type="evidence" value="ECO:0000250"/>
    <property type="project" value="UniProtKB"/>
</dbReference>
<dbReference type="GO" id="GO:0051045">
    <property type="term" value="P:negative regulation of membrane protein ectodomain proteolysis"/>
    <property type="evidence" value="ECO:0000250"/>
    <property type="project" value="UniProtKB"/>
</dbReference>
<dbReference type="GO" id="GO:0002904">
    <property type="term" value="P:positive regulation of B cell apoptotic process"/>
    <property type="evidence" value="ECO:0000250"/>
    <property type="project" value="UniProtKB"/>
</dbReference>
<dbReference type="GO" id="GO:0001819">
    <property type="term" value="P:positive regulation of cytokine production"/>
    <property type="evidence" value="ECO:0000250"/>
    <property type="project" value="UniProtKB"/>
</dbReference>
<dbReference type="GO" id="GO:0051091">
    <property type="term" value="P:positive regulation of DNA-binding transcription factor activity"/>
    <property type="evidence" value="ECO:0000250"/>
    <property type="project" value="UniProtKB"/>
</dbReference>
<dbReference type="GO" id="GO:0045893">
    <property type="term" value="P:positive regulation of DNA-templated transcription"/>
    <property type="evidence" value="ECO:0000250"/>
    <property type="project" value="UniProtKB"/>
</dbReference>
<dbReference type="GO" id="GO:0046427">
    <property type="term" value="P:positive regulation of receptor signaling pathway via JAK-STAT"/>
    <property type="evidence" value="ECO:0000318"/>
    <property type="project" value="GO_Central"/>
</dbReference>
<dbReference type="GO" id="GO:0051384">
    <property type="term" value="P:response to glucocorticoid"/>
    <property type="evidence" value="ECO:0000250"/>
    <property type="project" value="UniProtKB"/>
</dbReference>
<dbReference type="GO" id="GO:0002237">
    <property type="term" value="P:response to molecule of bacterial origin"/>
    <property type="evidence" value="ECO:0000250"/>
    <property type="project" value="UniProtKB"/>
</dbReference>
<dbReference type="FunFam" id="1.20.1250.10:FF:000011">
    <property type="entry name" value="Interleukin-10"/>
    <property type="match status" value="1"/>
</dbReference>
<dbReference type="Gene3D" id="1.20.1250.10">
    <property type="match status" value="1"/>
</dbReference>
<dbReference type="InterPro" id="IPR009079">
    <property type="entry name" value="4_helix_cytokine-like_core"/>
</dbReference>
<dbReference type="InterPro" id="IPR000098">
    <property type="entry name" value="IL-10"/>
</dbReference>
<dbReference type="InterPro" id="IPR020443">
    <property type="entry name" value="IL-10/19/20/24/26"/>
</dbReference>
<dbReference type="InterPro" id="IPR020423">
    <property type="entry name" value="IL-10_CS"/>
</dbReference>
<dbReference type="PANTHER" id="PTHR48482:SF5">
    <property type="entry name" value="INTERLEUKIN-10"/>
    <property type="match status" value="1"/>
</dbReference>
<dbReference type="PANTHER" id="PTHR48482">
    <property type="entry name" value="INTERLEUKIN-19-RELATED"/>
    <property type="match status" value="1"/>
</dbReference>
<dbReference type="Pfam" id="PF00726">
    <property type="entry name" value="IL10"/>
    <property type="match status" value="1"/>
</dbReference>
<dbReference type="PRINTS" id="PR01294">
    <property type="entry name" value="INTRLEUKIN10"/>
</dbReference>
<dbReference type="SMART" id="SM00188">
    <property type="entry name" value="IL10"/>
    <property type="match status" value="1"/>
</dbReference>
<dbReference type="SUPFAM" id="SSF47266">
    <property type="entry name" value="4-helical cytokines"/>
    <property type="match status" value="1"/>
</dbReference>
<dbReference type="PROSITE" id="PS00520">
    <property type="entry name" value="INTERLEUKIN_10"/>
    <property type="match status" value="1"/>
</dbReference>
<gene>
    <name type="primary">IL10</name>
</gene>
<keyword id="KW-0202">Cytokine</keyword>
<keyword id="KW-1015">Disulfide bond</keyword>
<keyword id="KW-0325">Glycoprotein</keyword>
<keyword id="KW-1185">Reference proteome</keyword>
<keyword id="KW-0964">Secreted</keyword>
<keyword id="KW-0732">Signal</keyword>
<protein>
    <recommendedName>
        <fullName>Interleukin-10</fullName>
        <shortName>IL-10</shortName>
    </recommendedName>
    <alternativeName>
        <fullName>Cytokine synthesis inhibitory factor</fullName>
        <shortName>CSIF</shortName>
    </alternativeName>
</protein>
<evidence type="ECO:0000250" key="1"/>
<evidence type="ECO:0000250" key="2">
    <source>
        <dbReference type="UniProtKB" id="P18893"/>
    </source>
</evidence>
<evidence type="ECO:0000250" key="3">
    <source>
        <dbReference type="UniProtKB" id="P22301"/>
    </source>
</evidence>
<evidence type="ECO:0000255" key="4"/>
<evidence type="ECO:0000305" key="5"/>
<organism>
    <name type="scientific">Felis catus</name>
    <name type="common">Cat</name>
    <name type="synonym">Felis silvestris catus</name>
    <dbReference type="NCBI Taxonomy" id="9685"/>
    <lineage>
        <taxon>Eukaryota</taxon>
        <taxon>Metazoa</taxon>
        <taxon>Chordata</taxon>
        <taxon>Craniata</taxon>
        <taxon>Vertebrata</taxon>
        <taxon>Euteleostomi</taxon>
        <taxon>Mammalia</taxon>
        <taxon>Eutheria</taxon>
        <taxon>Laurasiatheria</taxon>
        <taxon>Carnivora</taxon>
        <taxon>Feliformia</taxon>
        <taxon>Felidae</taxon>
        <taxon>Felinae</taxon>
        <taxon>Felis</taxon>
    </lineage>
</organism>
<feature type="signal peptide" evidence="4">
    <location>
        <begin position="1"/>
        <end position="18"/>
    </location>
</feature>
<feature type="chain" id="PRO_0000015358" description="Interleukin-10">
    <location>
        <begin position="19"/>
        <end position="178"/>
    </location>
</feature>
<feature type="glycosylation site" description="N-linked (GlcNAc...) asparagine" evidence="4">
    <location>
        <position position="29"/>
    </location>
</feature>
<feature type="glycosylation site" description="N-linked (GlcNAc...) asparagine" evidence="4">
    <location>
        <position position="134"/>
    </location>
</feature>
<feature type="disulfide bond" evidence="1">
    <location>
        <begin position="30"/>
        <end position="126"/>
    </location>
</feature>
<feature type="disulfide bond" evidence="1">
    <location>
        <begin position="80"/>
        <end position="132"/>
    </location>
</feature>
<accession>P55029</accession>
<accession>Q9TSJ7</accession>
<reference key="1">
    <citation type="submission" date="1995-10" db="EMBL/GenBank/DDBJ databases">
        <authorList>
            <person name="Scott B.M."/>
            <person name="O'Reilly K.L."/>
        </authorList>
    </citation>
    <scope>NUCLEOTIDE SEQUENCE [MRNA]</scope>
</reference>
<reference key="2">
    <citation type="submission" date="1998-04" db="EMBL/GenBank/DDBJ databases">
        <title>Molecular cloning and expression of feline interleukin-10.</title>
        <authorList>
            <person name="Leutenegger C.M."/>
            <person name="Huder J.B."/>
            <person name="Mislin C."/>
            <person name="Hofmann-Lehmann R."/>
            <person name="Fehr D."/>
            <person name="Dean G.A."/>
            <person name="Higgins J."/>
            <person name="Pedersen N.C."/>
            <person name="Lutz H."/>
        </authorList>
    </citation>
    <scope>NUCLEOTIDE SEQUENCE [MRNA]</scope>
</reference>
<comment type="function">
    <text evidence="2 3">Major immune regulatory cytokine that acts on many cells of the immune system where it has profound anti-inflammatory functions, limiting excessive tissue disruption caused by inflammation. Mechanistically, IL10 binds to its heterotetrameric receptor comprising IL10RA and IL10RB leading to JAK1 and STAT2-mediated phosphorylation of STAT3. In turn, STAT3 translocates to the nucleus where it drives expression of anti-inflammatory mediators. Targets antigen-presenting cells (APCs) such as macrophages and monocytes and inhibits their release of pro-inflammatory cytokines including granulocyte-macrophage colony-stimulating factor /GM-CSF, granulocyte colony-stimulating factor/G-CSF, IL-1 alpha, IL-1 beta, IL-6, IL-8 and TNF-alpha. Also interferes with antigen presentation by reducing the expression of MHC-class II and co-stimulatory molecules, thereby inhibiting their ability to induce T cell activation (By similarity). In addition, controls the inflammatory response of macrophages by reprogramming essential metabolic pathways including mTOR signaling (By similarity).</text>
</comment>
<comment type="subunit">
    <text evidence="3">Homodimer. Interacts with IL10RA and IL10RB.</text>
</comment>
<comment type="subcellular location">
    <subcellularLocation>
        <location evidence="3">Secreted</location>
    </subcellularLocation>
</comment>
<comment type="similarity">
    <text evidence="5">Belongs to the IL-10 family.</text>
</comment>
<sequence>MHSSALLCFLVFLAGVGASRHQSTLSEDNCTHFSVSLPHMLRELRAAFGKVKTFFQTKDELHSILLTRSLLEDFKGYLGCQALSEMIQFYLEEVMPQAENEDPDIKQHVNSLGEKLKTLRLRLRRCHRFLPCENKSKVVEQVKSTFSKLQEKGVYKAMGEFDIFINYIEAYMTMKMKI</sequence>
<proteinExistence type="evidence at transcript level"/>